<evidence type="ECO:0000255" key="1"/>
<evidence type="ECO:0000305" key="2"/>
<comment type="subcellular location">
    <subcellularLocation>
        <location evidence="2">Membrane</location>
        <topology evidence="2">Single-pass membrane protein</topology>
    </subcellularLocation>
</comment>
<comment type="similarity">
    <text evidence="2">Belongs to the SMIM19 family.</text>
</comment>
<comment type="sequence caution" evidence="2">
    <conflict type="erroneous initiation">
        <sequence resource="EMBL-CDS" id="AAI40496"/>
    </conflict>
    <text>Truncated N-terminus.</text>
</comment>
<name>SMI19_BOVIN</name>
<accession>A5D7B5</accession>
<feature type="chain" id="PRO_0000293733" description="Small integral membrane protein 19">
    <location>
        <begin position="1"/>
        <end position="107"/>
    </location>
</feature>
<feature type="transmembrane region" description="Helical" evidence="1">
    <location>
        <begin position="20"/>
        <end position="42"/>
    </location>
</feature>
<protein>
    <recommendedName>
        <fullName>Small integral membrane protein 19</fullName>
    </recommendedName>
</protein>
<dbReference type="EMBL" id="BC140495">
    <property type="protein sequence ID" value="AAI40496.1"/>
    <property type="status" value="ALT_INIT"/>
    <property type="molecule type" value="mRNA"/>
</dbReference>
<dbReference type="RefSeq" id="NP_001091509.2">
    <property type="nucleotide sequence ID" value="NM_001098040.2"/>
</dbReference>
<dbReference type="RefSeq" id="NP_001139590.1">
    <property type="nucleotide sequence ID" value="NM_001146118.1"/>
</dbReference>
<dbReference type="RefSeq" id="XP_010818636.1">
    <property type="nucleotide sequence ID" value="XM_010820334.1"/>
</dbReference>
<dbReference type="RefSeq" id="XP_059738206.1">
    <property type="nucleotide sequence ID" value="XM_059882223.1"/>
</dbReference>
<dbReference type="FunCoup" id="A5D7B5">
    <property type="interactions" value="1089"/>
</dbReference>
<dbReference type="STRING" id="9913.ENSBTAP00000054458"/>
<dbReference type="PaxDb" id="9913-ENSBTAP00000054458"/>
<dbReference type="Ensembl" id="ENSBTAT00000064873.3">
    <property type="protein sequence ID" value="ENSBTAP00000054458.3"/>
    <property type="gene ID" value="ENSBTAG00000000979.7"/>
</dbReference>
<dbReference type="GeneID" id="515895"/>
<dbReference type="KEGG" id="bta:515895"/>
<dbReference type="CTD" id="114926"/>
<dbReference type="VEuPathDB" id="HostDB:ENSBTAG00000000979"/>
<dbReference type="VGNC" id="VGNC:35018">
    <property type="gene designation" value="SMIM19"/>
</dbReference>
<dbReference type="eggNOG" id="ENOG502S18T">
    <property type="taxonomic scope" value="Eukaryota"/>
</dbReference>
<dbReference type="GeneTree" id="ENSGT00390000000436"/>
<dbReference type="HOGENOM" id="CLU_172229_0_0_1"/>
<dbReference type="InParanoid" id="A5D7B5"/>
<dbReference type="OMA" id="KYECQQP"/>
<dbReference type="OrthoDB" id="8663985at2759"/>
<dbReference type="TreeFam" id="TF332548"/>
<dbReference type="Proteomes" id="UP000009136">
    <property type="component" value="Chromosome 27"/>
</dbReference>
<dbReference type="Bgee" id="ENSBTAG00000000979">
    <property type="expression patterns" value="Expressed in biceps femoris and 103 other cell types or tissues"/>
</dbReference>
<dbReference type="GO" id="GO:0016020">
    <property type="term" value="C:membrane"/>
    <property type="evidence" value="ECO:0007669"/>
    <property type="project" value="UniProtKB-SubCell"/>
</dbReference>
<dbReference type="InterPro" id="IPR029368">
    <property type="entry name" value="SMIM19"/>
</dbReference>
<dbReference type="PANTHER" id="PTHR31888">
    <property type="entry name" value="SMALL INTEGRAL MEMBRANE PROTEIN 19"/>
    <property type="match status" value="1"/>
</dbReference>
<dbReference type="PANTHER" id="PTHR31888:SF1">
    <property type="entry name" value="SMALL INTEGRAL MEMBRANE PROTEIN 19"/>
    <property type="match status" value="1"/>
</dbReference>
<dbReference type="Pfam" id="PF15117">
    <property type="entry name" value="UPF0697"/>
    <property type="match status" value="1"/>
</dbReference>
<proteinExistence type="inferred from homology"/>
<gene>
    <name type="primary">SMIM19</name>
</gene>
<reference key="1">
    <citation type="submission" date="2007-04" db="EMBL/GenBank/DDBJ databases">
        <authorList>
            <consortium name="NIH - Mammalian Gene Collection (MGC) project"/>
        </authorList>
    </citation>
    <scope>NUCLEOTIDE SEQUENCE [LARGE SCALE MRNA]</scope>
    <source>
        <strain>Hereford</strain>
        <tissue>Ascending colon</tissue>
    </source>
</reference>
<keyword id="KW-0472">Membrane</keyword>
<keyword id="KW-1185">Reference proteome</keyword>
<keyword id="KW-0812">Transmembrane</keyword>
<keyword id="KW-1133">Transmembrane helix</keyword>
<organism>
    <name type="scientific">Bos taurus</name>
    <name type="common">Bovine</name>
    <dbReference type="NCBI Taxonomy" id="9913"/>
    <lineage>
        <taxon>Eukaryota</taxon>
        <taxon>Metazoa</taxon>
        <taxon>Chordata</taxon>
        <taxon>Craniata</taxon>
        <taxon>Vertebrata</taxon>
        <taxon>Euteleostomi</taxon>
        <taxon>Mammalia</taxon>
        <taxon>Eutheria</taxon>
        <taxon>Laurasiatheria</taxon>
        <taxon>Artiodactyla</taxon>
        <taxon>Ruminantia</taxon>
        <taxon>Pecora</taxon>
        <taxon>Bovidae</taxon>
        <taxon>Bovinae</taxon>
        <taxon>Bos</taxon>
    </lineage>
</organism>
<sequence>MPGGYGVMGDDGAMDYSVHEAWNEATNVYLVVILVSFGLFMYAKRNKRKIMRIFSLPPPAETLSEPNFYDTISKIRLRQQLEMYSISRKYDYQQPQSQADSVQLSLE</sequence>